<accession>B3VZU4</accession>
<organism>
    <name type="scientific">Rana dybowskii</name>
    <name type="common">Dybovsky's frog</name>
    <name type="synonym">Korean brown frog</name>
    <dbReference type="NCBI Taxonomy" id="71582"/>
    <lineage>
        <taxon>Eukaryota</taxon>
        <taxon>Metazoa</taxon>
        <taxon>Chordata</taxon>
        <taxon>Craniata</taxon>
        <taxon>Vertebrata</taxon>
        <taxon>Euteleostomi</taxon>
        <taxon>Amphibia</taxon>
        <taxon>Batrachia</taxon>
        <taxon>Anura</taxon>
        <taxon>Neobatrachia</taxon>
        <taxon>Ranoidea</taxon>
        <taxon>Ranidae</taxon>
        <taxon>Rana</taxon>
        <taxon>Rana</taxon>
    </lineage>
</organism>
<evidence type="ECO:0000250" key="1">
    <source>
        <dbReference type="UniProtKB" id="P56918"/>
    </source>
</evidence>
<evidence type="ECO:0000255" key="2"/>
<evidence type="ECO:0000269" key="3">
    <source>
    </source>
</evidence>
<evidence type="ECO:0000303" key="4">
    <source>
    </source>
</evidence>
<evidence type="ECO:0000305" key="5"/>
<evidence type="ECO:0000312" key="6">
    <source>
        <dbReference type="EMBL" id="ACF08004.1"/>
    </source>
</evidence>
<reference evidence="5 6" key="1">
    <citation type="journal article" date="2009" name="Comp. Biochem. Physiol.">
        <title>Characterization of antimicrobial peptides isolated from the skin of the Chinese frog, Rana dybowskii.</title>
        <authorList>
            <person name="Jin L.-L."/>
            <person name="Li Q."/>
            <person name="Song S.-S."/>
            <person name="Feng K."/>
            <person name="Zhang D.-B."/>
            <person name="Wang Q.-Y."/>
            <person name="Chen Y.-H."/>
        </authorList>
    </citation>
    <scope>NUCLEOTIDE SEQUENCE [MRNA]</scope>
    <scope>FUNCTION</scope>
    <scope>TISSUE SPECIFICITY</scope>
    <source>
        <tissue evidence="6">Skin</tissue>
    </source>
</reference>
<dbReference type="EMBL" id="EU827804">
    <property type="protein sequence ID" value="ACF08004.1"/>
    <property type="molecule type" value="mRNA"/>
</dbReference>
<dbReference type="GO" id="GO:0005576">
    <property type="term" value="C:extracellular region"/>
    <property type="evidence" value="ECO:0000250"/>
    <property type="project" value="UniProtKB"/>
</dbReference>
<dbReference type="GO" id="GO:0050829">
    <property type="term" value="P:defense response to Gram-negative bacterium"/>
    <property type="evidence" value="ECO:0000314"/>
    <property type="project" value="UniProtKB"/>
</dbReference>
<dbReference type="GO" id="GO:0050830">
    <property type="term" value="P:defense response to Gram-positive bacterium"/>
    <property type="evidence" value="ECO:0000314"/>
    <property type="project" value="UniProtKB"/>
</dbReference>
<dbReference type="GO" id="GO:0044179">
    <property type="term" value="P:hemolysis in another organism"/>
    <property type="evidence" value="ECO:0000314"/>
    <property type="project" value="UniProtKB"/>
</dbReference>
<dbReference type="InterPro" id="IPR004275">
    <property type="entry name" value="Frog_antimicrobial_propeptide"/>
</dbReference>
<dbReference type="Pfam" id="PF03032">
    <property type="entry name" value="FSAP_sig_propep"/>
    <property type="match status" value="1"/>
</dbReference>
<feature type="signal peptide" evidence="2 6">
    <location>
        <begin position="1"/>
        <end position="22"/>
    </location>
</feature>
<feature type="propeptide" id="PRO_0000391433" evidence="1">
    <location>
        <begin position="23"/>
        <end position="45"/>
    </location>
</feature>
<feature type="peptide" id="PRO_5000381483" description="Temporin-CDYb" evidence="3">
    <location>
        <begin position="48"/>
        <end position="60"/>
    </location>
</feature>
<feature type="modified residue" description="Leucine amide" evidence="1">
    <location>
        <position position="60"/>
    </location>
</feature>
<comment type="function">
    <text evidence="3">Antimicrobial peptide. Has low activity against the Gram-positive bacterium S.aureus (MIC&gt;100 uM) and the Gram-negative bacterium E.coli (MIC&gt;100 uM). Has weak hemolytic activity against human erythrocytes.</text>
</comment>
<comment type="subcellular location">
    <subcellularLocation>
        <location evidence="1">Secreted</location>
    </subcellularLocation>
</comment>
<comment type="tissue specificity">
    <text evidence="3">Expressed by the skin glands.</text>
</comment>
<comment type="similarity">
    <text evidence="2">Belongs to the frog skin active peptide (FSAP) family. Temporin subfamily.</text>
</comment>
<name>TPB_RANDY</name>
<sequence length="62" mass="7083">MFTLKKSLLLLFFLGTINLSLCEEERDADEEERRDDPEERAVQVEKRILPILAPLIGGLLGK</sequence>
<proteinExistence type="evidence at transcript level"/>
<protein>
    <recommendedName>
        <fullName evidence="4 6">Temporin-CDYb</fullName>
    </recommendedName>
</protein>
<keyword id="KW-0027">Amidation</keyword>
<keyword id="KW-0878">Amphibian defense peptide</keyword>
<keyword id="KW-0044">Antibiotic</keyword>
<keyword id="KW-0929">Antimicrobial</keyword>
<keyword id="KW-0165">Cleavage on pair of basic residues</keyword>
<keyword id="KW-0204">Cytolysis</keyword>
<keyword id="KW-0354">Hemolysis</keyword>
<keyword id="KW-0964">Secreted</keyword>
<keyword id="KW-0732">Signal</keyword>